<proteinExistence type="inferred from homology"/>
<gene>
    <name evidence="1" type="primary">cmoA</name>
    <name type="ordered locus">HDEF_1305</name>
</gene>
<protein>
    <recommendedName>
        <fullName evidence="1">Carboxy-S-adenosyl-L-methionine synthase</fullName>
        <shortName evidence="1">Cx-SAM synthase</shortName>
        <ecNumber evidence="1">2.1.3.-</ecNumber>
    </recommendedName>
</protein>
<feature type="chain" id="PRO_1000215638" description="Carboxy-S-adenosyl-L-methionine synthase">
    <location>
        <begin position="1"/>
        <end position="255"/>
    </location>
</feature>
<feature type="binding site" evidence="1">
    <location>
        <position position="45"/>
    </location>
    <ligand>
        <name>S-adenosyl-L-methionine</name>
        <dbReference type="ChEBI" id="CHEBI:59789"/>
    </ligand>
</feature>
<feature type="binding site" evidence="1">
    <location>
        <begin position="70"/>
        <end position="72"/>
    </location>
    <ligand>
        <name>S-adenosyl-L-methionine</name>
        <dbReference type="ChEBI" id="CHEBI:59789"/>
    </ligand>
</feature>
<feature type="binding site" evidence="1">
    <location>
        <begin position="124"/>
        <end position="125"/>
    </location>
    <ligand>
        <name>S-adenosyl-L-methionine</name>
        <dbReference type="ChEBI" id="CHEBI:59789"/>
    </ligand>
</feature>
<feature type="binding site" evidence="1">
    <location>
        <position position="139"/>
    </location>
    <ligand>
        <name>S-adenosyl-L-methionine</name>
        <dbReference type="ChEBI" id="CHEBI:59789"/>
    </ligand>
</feature>
<comment type="function">
    <text evidence="1">Catalyzes the conversion of S-adenosyl-L-methionine (SAM) to carboxy-S-adenosyl-L-methionine (Cx-SAM).</text>
</comment>
<comment type="catalytic activity">
    <reaction evidence="1">
        <text>prephenate + S-adenosyl-L-methionine = carboxy-S-adenosyl-L-methionine + 3-phenylpyruvate + H2O</text>
        <dbReference type="Rhea" id="RHEA:51692"/>
        <dbReference type="ChEBI" id="CHEBI:15377"/>
        <dbReference type="ChEBI" id="CHEBI:18005"/>
        <dbReference type="ChEBI" id="CHEBI:29934"/>
        <dbReference type="ChEBI" id="CHEBI:59789"/>
        <dbReference type="ChEBI" id="CHEBI:134278"/>
    </reaction>
</comment>
<comment type="subunit">
    <text evidence="1">Homodimer.</text>
</comment>
<comment type="similarity">
    <text evidence="1">Belongs to the class I-like SAM-binding methyltransferase superfamily. Cx-SAM synthase family.</text>
</comment>
<keyword id="KW-0949">S-adenosyl-L-methionine</keyword>
<keyword id="KW-0808">Transferase</keyword>
<accession>C4K5W2</accession>
<dbReference type="EC" id="2.1.3.-" evidence="1"/>
<dbReference type="EMBL" id="CP001277">
    <property type="protein sequence ID" value="ACQ67955.1"/>
    <property type="molecule type" value="Genomic_DNA"/>
</dbReference>
<dbReference type="RefSeq" id="WP_015873744.1">
    <property type="nucleotide sequence ID" value="NC_012751.1"/>
</dbReference>
<dbReference type="SMR" id="C4K5W2"/>
<dbReference type="STRING" id="572265.HDEF_1305"/>
<dbReference type="GeneID" id="66260999"/>
<dbReference type="KEGG" id="hde:HDEF_1305"/>
<dbReference type="eggNOG" id="COG0500">
    <property type="taxonomic scope" value="Bacteria"/>
</dbReference>
<dbReference type="HOGENOM" id="CLU_078475_0_0_6"/>
<dbReference type="Proteomes" id="UP000002334">
    <property type="component" value="Chromosome"/>
</dbReference>
<dbReference type="GO" id="GO:0016743">
    <property type="term" value="F:carboxyl- or carbamoyltransferase activity"/>
    <property type="evidence" value="ECO:0007669"/>
    <property type="project" value="UniProtKB-UniRule"/>
</dbReference>
<dbReference type="GO" id="GO:1904047">
    <property type="term" value="F:S-adenosyl-L-methionine binding"/>
    <property type="evidence" value="ECO:0007669"/>
    <property type="project" value="UniProtKB-UniRule"/>
</dbReference>
<dbReference type="GO" id="GO:0002098">
    <property type="term" value="P:tRNA wobble uridine modification"/>
    <property type="evidence" value="ECO:0007669"/>
    <property type="project" value="InterPro"/>
</dbReference>
<dbReference type="CDD" id="cd02440">
    <property type="entry name" value="AdoMet_MTases"/>
    <property type="match status" value="1"/>
</dbReference>
<dbReference type="Gene3D" id="3.40.50.150">
    <property type="entry name" value="Vaccinia Virus protein VP39"/>
    <property type="match status" value="1"/>
</dbReference>
<dbReference type="HAMAP" id="MF_01589">
    <property type="entry name" value="Cx_SAM_synthase"/>
    <property type="match status" value="1"/>
</dbReference>
<dbReference type="InterPro" id="IPR005271">
    <property type="entry name" value="CmoA"/>
</dbReference>
<dbReference type="InterPro" id="IPR041698">
    <property type="entry name" value="Methyltransf_25"/>
</dbReference>
<dbReference type="InterPro" id="IPR029063">
    <property type="entry name" value="SAM-dependent_MTases_sf"/>
</dbReference>
<dbReference type="NCBIfam" id="TIGR00740">
    <property type="entry name" value="carboxy-S-adenosyl-L-methionine synthase CmoA"/>
    <property type="match status" value="1"/>
</dbReference>
<dbReference type="NCBIfam" id="NF011995">
    <property type="entry name" value="PRK15451.1"/>
    <property type="match status" value="1"/>
</dbReference>
<dbReference type="PANTHER" id="PTHR43861:SF2">
    <property type="entry name" value="CARBOXY-S-ADENOSYL-L-METHIONINE SYNTHASE"/>
    <property type="match status" value="1"/>
</dbReference>
<dbReference type="PANTHER" id="PTHR43861">
    <property type="entry name" value="TRANS-ACONITATE 2-METHYLTRANSFERASE-RELATED"/>
    <property type="match status" value="1"/>
</dbReference>
<dbReference type="Pfam" id="PF13649">
    <property type="entry name" value="Methyltransf_25"/>
    <property type="match status" value="1"/>
</dbReference>
<dbReference type="PIRSF" id="PIRSF006325">
    <property type="entry name" value="MeTrfase_bac"/>
    <property type="match status" value="1"/>
</dbReference>
<dbReference type="SUPFAM" id="SSF53335">
    <property type="entry name" value="S-adenosyl-L-methionine-dependent methyltransferases"/>
    <property type="match status" value="1"/>
</dbReference>
<sequence>MVLSSKNDQPDHLFAAPIEKLGDWAFDEQVAAVFPNMITRSIPGYTNIITMIGMLSKRFVKPHTQIYDLGCSHGAACLSIYPNILDIPSCKIIAVEESPAMIKYCRENLMAHCDQIPIEIIEDDILNIKIDNASMVILNFTLQFLDPGHRENVLNRIYQGLNPGGILVLSEKFHFEDPDIGPLLFDMHHDFKRAHGYSDLEISQKSTMLKNVMRIDSVETHQNRLRQAGFEQMDLWFQCFNFGSLLALKTSSSND</sequence>
<evidence type="ECO:0000255" key="1">
    <source>
        <dbReference type="HAMAP-Rule" id="MF_01589"/>
    </source>
</evidence>
<organism>
    <name type="scientific">Hamiltonella defensa subsp. Acyrthosiphon pisum (strain 5AT)</name>
    <dbReference type="NCBI Taxonomy" id="572265"/>
    <lineage>
        <taxon>Bacteria</taxon>
        <taxon>Pseudomonadati</taxon>
        <taxon>Pseudomonadota</taxon>
        <taxon>Gammaproteobacteria</taxon>
        <taxon>Enterobacterales</taxon>
        <taxon>Enterobacteriaceae</taxon>
        <taxon>aphid secondary symbionts</taxon>
        <taxon>Candidatus Hamiltonella</taxon>
    </lineage>
</organism>
<reference key="1">
    <citation type="journal article" date="2009" name="Proc. Natl. Acad. Sci. U.S.A.">
        <title>Hamiltonella defensa, genome evolution of protective bacterial endosymbiont from pathogenic ancestors.</title>
        <authorList>
            <person name="Degnan P.H."/>
            <person name="Yu Y."/>
            <person name="Sisneros N."/>
            <person name="Wing R.A."/>
            <person name="Moran N.A."/>
        </authorList>
    </citation>
    <scope>NUCLEOTIDE SEQUENCE [LARGE SCALE GENOMIC DNA]</scope>
    <source>
        <strain>5AT</strain>
    </source>
</reference>
<name>CMOA_HAMD5</name>